<feature type="chain" id="PRO_0000177949" description="DNA mismatch repair protein MutL">
    <location>
        <begin position="1"/>
        <end position="678"/>
    </location>
</feature>
<name>MUTL_LACPL</name>
<keyword id="KW-0227">DNA damage</keyword>
<keyword id="KW-0234">DNA repair</keyword>
<keyword id="KW-1185">Reference proteome</keyword>
<dbReference type="EMBL" id="AL935263">
    <property type="protein sequence ID" value="CCC79497.1"/>
    <property type="molecule type" value="Genomic_DNA"/>
</dbReference>
<dbReference type="RefSeq" id="WP_011101707.1">
    <property type="nucleotide sequence ID" value="NC_004567.2"/>
</dbReference>
<dbReference type="RefSeq" id="YP_004890011.1">
    <property type="nucleotide sequence ID" value="NC_004567.2"/>
</dbReference>
<dbReference type="SMR" id="Q88UZ8"/>
<dbReference type="STRING" id="220668.lp_2297"/>
<dbReference type="EnsemblBacteria" id="CCC79497">
    <property type="protein sequence ID" value="CCC79497"/>
    <property type="gene ID" value="lp_2297"/>
</dbReference>
<dbReference type="KEGG" id="lpl:lp_2297"/>
<dbReference type="PATRIC" id="fig|220668.9.peg.1941"/>
<dbReference type="eggNOG" id="COG0323">
    <property type="taxonomic scope" value="Bacteria"/>
</dbReference>
<dbReference type="HOGENOM" id="CLU_004131_4_1_9"/>
<dbReference type="OrthoDB" id="9763467at2"/>
<dbReference type="PhylomeDB" id="Q88UZ8"/>
<dbReference type="Proteomes" id="UP000000432">
    <property type="component" value="Chromosome"/>
</dbReference>
<dbReference type="GO" id="GO:0032300">
    <property type="term" value="C:mismatch repair complex"/>
    <property type="evidence" value="ECO:0007669"/>
    <property type="project" value="InterPro"/>
</dbReference>
<dbReference type="GO" id="GO:0005524">
    <property type="term" value="F:ATP binding"/>
    <property type="evidence" value="ECO:0007669"/>
    <property type="project" value="InterPro"/>
</dbReference>
<dbReference type="GO" id="GO:0016887">
    <property type="term" value="F:ATP hydrolysis activity"/>
    <property type="evidence" value="ECO:0007669"/>
    <property type="project" value="InterPro"/>
</dbReference>
<dbReference type="GO" id="GO:0140664">
    <property type="term" value="F:ATP-dependent DNA damage sensor activity"/>
    <property type="evidence" value="ECO:0007669"/>
    <property type="project" value="InterPro"/>
</dbReference>
<dbReference type="GO" id="GO:0030983">
    <property type="term" value="F:mismatched DNA binding"/>
    <property type="evidence" value="ECO:0007669"/>
    <property type="project" value="InterPro"/>
</dbReference>
<dbReference type="GO" id="GO:0006298">
    <property type="term" value="P:mismatch repair"/>
    <property type="evidence" value="ECO:0007669"/>
    <property type="project" value="UniProtKB-UniRule"/>
</dbReference>
<dbReference type="CDD" id="cd16926">
    <property type="entry name" value="HATPase_MutL-MLH-PMS-like"/>
    <property type="match status" value="1"/>
</dbReference>
<dbReference type="CDD" id="cd00782">
    <property type="entry name" value="MutL_Trans"/>
    <property type="match status" value="1"/>
</dbReference>
<dbReference type="FunFam" id="3.30.565.10:FF:000003">
    <property type="entry name" value="DNA mismatch repair endonuclease MutL"/>
    <property type="match status" value="1"/>
</dbReference>
<dbReference type="Gene3D" id="3.30.230.10">
    <property type="match status" value="1"/>
</dbReference>
<dbReference type="Gene3D" id="3.30.565.10">
    <property type="entry name" value="Histidine kinase-like ATPase, C-terminal domain"/>
    <property type="match status" value="1"/>
</dbReference>
<dbReference type="Gene3D" id="3.30.1540.20">
    <property type="entry name" value="MutL, C-terminal domain, dimerisation subdomain"/>
    <property type="match status" value="1"/>
</dbReference>
<dbReference type="Gene3D" id="3.30.1370.100">
    <property type="entry name" value="MutL, C-terminal domain, regulatory subdomain"/>
    <property type="match status" value="1"/>
</dbReference>
<dbReference type="HAMAP" id="MF_00149">
    <property type="entry name" value="DNA_mis_repair"/>
    <property type="match status" value="1"/>
</dbReference>
<dbReference type="InterPro" id="IPR014762">
    <property type="entry name" value="DNA_mismatch_repair_CS"/>
</dbReference>
<dbReference type="InterPro" id="IPR020667">
    <property type="entry name" value="DNA_mismatch_repair_MutL"/>
</dbReference>
<dbReference type="InterPro" id="IPR013507">
    <property type="entry name" value="DNA_mismatch_S5_2-like"/>
</dbReference>
<dbReference type="InterPro" id="IPR036890">
    <property type="entry name" value="HATPase_C_sf"/>
</dbReference>
<dbReference type="InterPro" id="IPR002099">
    <property type="entry name" value="MutL/Mlh/PMS"/>
</dbReference>
<dbReference type="InterPro" id="IPR038973">
    <property type="entry name" value="MutL/Mlh/Pms-like"/>
</dbReference>
<dbReference type="InterPro" id="IPR014790">
    <property type="entry name" value="MutL_C"/>
</dbReference>
<dbReference type="InterPro" id="IPR042120">
    <property type="entry name" value="MutL_C_dimsub"/>
</dbReference>
<dbReference type="InterPro" id="IPR042121">
    <property type="entry name" value="MutL_C_regsub"/>
</dbReference>
<dbReference type="InterPro" id="IPR037198">
    <property type="entry name" value="MutL_C_sf"/>
</dbReference>
<dbReference type="InterPro" id="IPR020568">
    <property type="entry name" value="Ribosomal_Su5_D2-typ_SF"/>
</dbReference>
<dbReference type="InterPro" id="IPR014721">
    <property type="entry name" value="Ribsml_uS5_D2-typ_fold_subgr"/>
</dbReference>
<dbReference type="NCBIfam" id="TIGR00585">
    <property type="entry name" value="mutl"/>
    <property type="match status" value="1"/>
</dbReference>
<dbReference type="NCBIfam" id="NF000950">
    <property type="entry name" value="PRK00095.1-3"/>
    <property type="match status" value="1"/>
</dbReference>
<dbReference type="PANTHER" id="PTHR10073">
    <property type="entry name" value="DNA MISMATCH REPAIR PROTEIN MLH, PMS, MUTL"/>
    <property type="match status" value="1"/>
</dbReference>
<dbReference type="PANTHER" id="PTHR10073:SF12">
    <property type="entry name" value="DNA MISMATCH REPAIR PROTEIN MLH1"/>
    <property type="match status" value="1"/>
</dbReference>
<dbReference type="Pfam" id="PF01119">
    <property type="entry name" value="DNA_mis_repair"/>
    <property type="match status" value="1"/>
</dbReference>
<dbReference type="Pfam" id="PF13589">
    <property type="entry name" value="HATPase_c_3"/>
    <property type="match status" value="1"/>
</dbReference>
<dbReference type="Pfam" id="PF08676">
    <property type="entry name" value="MutL_C"/>
    <property type="match status" value="1"/>
</dbReference>
<dbReference type="SMART" id="SM01340">
    <property type="entry name" value="DNA_mis_repair"/>
    <property type="match status" value="1"/>
</dbReference>
<dbReference type="SMART" id="SM00853">
    <property type="entry name" value="MutL_C"/>
    <property type="match status" value="1"/>
</dbReference>
<dbReference type="SUPFAM" id="SSF55874">
    <property type="entry name" value="ATPase domain of HSP90 chaperone/DNA topoisomerase II/histidine kinase"/>
    <property type="match status" value="1"/>
</dbReference>
<dbReference type="SUPFAM" id="SSF118116">
    <property type="entry name" value="DNA mismatch repair protein MutL"/>
    <property type="match status" value="1"/>
</dbReference>
<dbReference type="SUPFAM" id="SSF54211">
    <property type="entry name" value="Ribosomal protein S5 domain 2-like"/>
    <property type="match status" value="1"/>
</dbReference>
<dbReference type="PROSITE" id="PS00058">
    <property type="entry name" value="DNA_MISMATCH_REPAIR_1"/>
    <property type="match status" value="1"/>
</dbReference>
<proteinExistence type="inferred from homology"/>
<organism>
    <name type="scientific">Lactiplantibacillus plantarum (strain ATCC BAA-793 / NCIMB 8826 / WCFS1)</name>
    <name type="common">Lactobacillus plantarum</name>
    <dbReference type="NCBI Taxonomy" id="220668"/>
    <lineage>
        <taxon>Bacteria</taxon>
        <taxon>Bacillati</taxon>
        <taxon>Bacillota</taxon>
        <taxon>Bacilli</taxon>
        <taxon>Lactobacillales</taxon>
        <taxon>Lactobacillaceae</taxon>
        <taxon>Lactiplantibacillus</taxon>
    </lineage>
</organism>
<comment type="function">
    <text evidence="1">This protein is involved in the repair of mismatches in DNA. It is required for dam-dependent methyl-directed DNA mismatch repair. May act as a 'molecular matchmaker', a protein that promotes the formation of a stable complex between two or more DNA-binding proteins in an ATP-dependent manner without itself being part of a final effector complex.</text>
</comment>
<comment type="similarity">
    <text evidence="1">Belongs to the DNA mismatch repair MutL/HexB family.</text>
</comment>
<evidence type="ECO:0000255" key="1">
    <source>
        <dbReference type="HAMAP-Rule" id="MF_00149"/>
    </source>
</evidence>
<sequence length="678" mass="74105">MGKIHELSSVLADQIAAGEVVERPASVVKELVENAVDAHATQVDILVQESGVQSIRVIDDGDGIDDAEVLTAFKRHATSKITSREDLFRVHSLGFRGEALPSIASVADVVMNTSTGATGTSIHYRGGKLLQQSPAPLRQGTDITVTDLFFNTPARLKYLKSPQTELANILDVVNRIALSYPAVAFRLVHNAKELLKTAGRGDLQQVIAGIYGVQNARKMVAIQGSTTDFKLSGFVALPELTRASRQYITVLINGRAIKNQQLTKAVIKGYGSKLMVGRYPIAVIALTMDPLLVDVNVHPTKQEVRLSKEPELAKLVSTTITDRLVDVNLIPSALTNLGSHRREHLNTDQLAMDLNAVSSQYQVADKTTPASTEQFAASLAAATMQPSSATTMVSTTSAQPSAVNRAAVSAVVPSESAASSANQPIMISHRDELTATPVQAFDQRYQSESGALPFGETAEPLETSTAASAPTSEAPDTERFPQLRYLGQMHGTYLLAEADDGMYILDQHAAQERINYEYYRQAIGEVSADQQNLLVPIILDYPTSDVLKIKEKLPLLAELGIHLESFGGNSFIVHAHPTWFKAGQEEDTIREMIDWLLQDDKLTVAQFREKSAIMMSCKRAIKANHHLDDQQARALLAKLPTCENPFNCPHGRPVTVHFTNSDMERMFKRIQDSHEARD</sequence>
<gene>
    <name evidence="1" type="primary">mutL</name>
    <name type="synonym">hexB</name>
    <name type="ordered locus">lp_2297</name>
</gene>
<reference key="1">
    <citation type="journal article" date="2003" name="Proc. Natl. Acad. Sci. U.S.A.">
        <title>Complete genome sequence of Lactobacillus plantarum WCFS1.</title>
        <authorList>
            <person name="Kleerebezem M."/>
            <person name="Boekhorst J."/>
            <person name="van Kranenburg R."/>
            <person name="Molenaar D."/>
            <person name="Kuipers O.P."/>
            <person name="Leer R."/>
            <person name="Tarchini R."/>
            <person name="Peters S.A."/>
            <person name="Sandbrink H.M."/>
            <person name="Fiers M.W.E.J."/>
            <person name="Stiekema W."/>
            <person name="Klein Lankhorst R.M."/>
            <person name="Bron P.A."/>
            <person name="Hoffer S.M."/>
            <person name="Nierop Groot M.N."/>
            <person name="Kerkhoven R."/>
            <person name="De Vries M."/>
            <person name="Ursing B."/>
            <person name="De Vos W.M."/>
            <person name="Siezen R.J."/>
        </authorList>
    </citation>
    <scope>NUCLEOTIDE SEQUENCE [LARGE SCALE GENOMIC DNA]</scope>
    <source>
        <strain>ATCC BAA-793 / NCIMB 8826 / WCFS1</strain>
    </source>
</reference>
<reference key="2">
    <citation type="journal article" date="2012" name="J. Bacteriol.">
        <title>Complete resequencing and reannotation of the Lactobacillus plantarum WCFS1 genome.</title>
        <authorList>
            <person name="Siezen R.J."/>
            <person name="Francke C."/>
            <person name="Renckens B."/>
            <person name="Boekhorst J."/>
            <person name="Wels M."/>
            <person name="Kleerebezem M."/>
            <person name="van Hijum S.A."/>
        </authorList>
    </citation>
    <scope>NUCLEOTIDE SEQUENCE [LARGE SCALE GENOMIC DNA]</scope>
    <scope>GENOME REANNOTATION</scope>
    <source>
        <strain>ATCC BAA-793 / NCIMB 8826 / WCFS1</strain>
    </source>
</reference>
<accession>Q88UZ8</accession>
<accession>F9UQK8</accession>
<protein>
    <recommendedName>
        <fullName evidence="1">DNA mismatch repair protein MutL</fullName>
    </recommendedName>
</protein>